<gene>
    <name evidence="1" type="primary">hisZ</name>
    <name type="ordered locus">BMASAVP1_A1824</name>
</gene>
<comment type="function">
    <text evidence="1">Required for the first step of histidine biosynthesis. May allow the feedback regulation of ATP phosphoribosyltransferase activity by histidine.</text>
</comment>
<comment type="pathway">
    <text evidence="1">Amino-acid biosynthesis; L-histidine biosynthesis; L-histidine from 5-phospho-alpha-D-ribose 1-diphosphate: step 1/9.</text>
</comment>
<comment type="subunit">
    <text evidence="1">Heteromultimer composed of HisG and HisZ subunits.</text>
</comment>
<comment type="subcellular location">
    <subcellularLocation>
        <location evidence="1">Cytoplasm</location>
    </subcellularLocation>
</comment>
<comment type="miscellaneous">
    <text>This function is generally fulfilled by the C-terminal part of HisG, which is missing in some bacteria such as this one.</text>
</comment>
<comment type="similarity">
    <text evidence="1">Belongs to the class-II aminoacyl-tRNA synthetase family. HisZ subfamily.</text>
</comment>
<keyword id="KW-0028">Amino-acid biosynthesis</keyword>
<keyword id="KW-0963">Cytoplasm</keyword>
<keyword id="KW-0368">Histidine biosynthesis</keyword>
<dbReference type="EMBL" id="CP000526">
    <property type="protein sequence ID" value="ABM52616.1"/>
    <property type="molecule type" value="Genomic_DNA"/>
</dbReference>
<dbReference type="RefSeq" id="WP_004192327.1">
    <property type="nucleotide sequence ID" value="NC_008785.1"/>
</dbReference>
<dbReference type="SMR" id="A1V4J0"/>
<dbReference type="KEGG" id="bmv:BMASAVP1_A1824"/>
<dbReference type="HOGENOM" id="CLU_025113_0_1_4"/>
<dbReference type="UniPathway" id="UPA00031">
    <property type="reaction ID" value="UER00006"/>
</dbReference>
<dbReference type="GO" id="GO:0005737">
    <property type="term" value="C:cytoplasm"/>
    <property type="evidence" value="ECO:0007669"/>
    <property type="project" value="UniProtKB-SubCell"/>
</dbReference>
<dbReference type="GO" id="GO:0004821">
    <property type="term" value="F:histidine-tRNA ligase activity"/>
    <property type="evidence" value="ECO:0007669"/>
    <property type="project" value="TreeGrafter"/>
</dbReference>
<dbReference type="GO" id="GO:0006427">
    <property type="term" value="P:histidyl-tRNA aminoacylation"/>
    <property type="evidence" value="ECO:0007669"/>
    <property type="project" value="TreeGrafter"/>
</dbReference>
<dbReference type="GO" id="GO:0000105">
    <property type="term" value="P:L-histidine biosynthetic process"/>
    <property type="evidence" value="ECO:0007669"/>
    <property type="project" value="UniProtKB-UniRule"/>
</dbReference>
<dbReference type="CDD" id="cd00773">
    <property type="entry name" value="HisRS-like_core"/>
    <property type="match status" value="1"/>
</dbReference>
<dbReference type="Gene3D" id="3.30.930.10">
    <property type="entry name" value="Bira Bifunctional Protein, Domain 2"/>
    <property type="match status" value="1"/>
</dbReference>
<dbReference type="HAMAP" id="MF_00125">
    <property type="entry name" value="HisZ"/>
    <property type="match status" value="1"/>
</dbReference>
<dbReference type="InterPro" id="IPR045864">
    <property type="entry name" value="aa-tRNA-synth_II/BPL/LPL"/>
</dbReference>
<dbReference type="InterPro" id="IPR041715">
    <property type="entry name" value="HisRS-like_core"/>
</dbReference>
<dbReference type="InterPro" id="IPR004516">
    <property type="entry name" value="HisRS/HisZ"/>
</dbReference>
<dbReference type="InterPro" id="IPR004517">
    <property type="entry name" value="HisZ"/>
</dbReference>
<dbReference type="NCBIfam" id="TIGR00443">
    <property type="entry name" value="hisZ_biosyn_reg"/>
    <property type="match status" value="1"/>
</dbReference>
<dbReference type="NCBIfam" id="NF008935">
    <property type="entry name" value="PRK12292.1-1"/>
    <property type="match status" value="1"/>
</dbReference>
<dbReference type="NCBIfam" id="NF009086">
    <property type="entry name" value="PRK12421.1"/>
    <property type="match status" value="1"/>
</dbReference>
<dbReference type="PANTHER" id="PTHR43707:SF1">
    <property type="entry name" value="HISTIDINE--TRNA LIGASE, MITOCHONDRIAL-RELATED"/>
    <property type="match status" value="1"/>
</dbReference>
<dbReference type="PANTHER" id="PTHR43707">
    <property type="entry name" value="HISTIDYL-TRNA SYNTHETASE"/>
    <property type="match status" value="1"/>
</dbReference>
<dbReference type="Pfam" id="PF13393">
    <property type="entry name" value="tRNA-synt_His"/>
    <property type="match status" value="1"/>
</dbReference>
<dbReference type="PIRSF" id="PIRSF001549">
    <property type="entry name" value="His-tRNA_synth"/>
    <property type="match status" value="1"/>
</dbReference>
<dbReference type="SUPFAM" id="SSF55681">
    <property type="entry name" value="Class II aaRS and biotin synthetases"/>
    <property type="match status" value="1"/>
</dbReference>
<protein>
    <recommendedName>
        <fullName evidence="1">ATP phosphoribosyltransferase regulatory subunit</fullName>
    </recommendedName>
</protein>
<name>HISZ_BURMS</name>
<accession>A1V4J0</accession>
<organism>
    <name type="scientific">Burkholderia mallei (strain SAVP1)</name>
    <dbReference type="NCBI Taxonomy" id="320388"/>
    <lineage>
        <taxon>Bacteria</taxon>
        <taxon>Pseudomonadati</taxon>
        <taxon>Pseudomonadota</taxon>
        <taxon>Betaproteobacteria</taxon>
        <taxon>Burkholderiales</taxon>
        <taxon>Burkholderiaceae</taxon>
        <taxon>Burkholderia</taxon>
        <taxon>pseudomallei group</taxon>
    </lineage>
</organism>
<sequence length="382" mass="41779">MSTWLLPENIADVLPSEARKIEELRRRLLDRFRSYGYEMVMPPLLEYLESLLTSGGNELRLRTFKLVDQVSGRTLGLRADMTPQVARIDAHLLNRQGVTRLCYAGPVLHTRPRGLHASREQLQIGAEIYGHAGLEADQEIQQLMLDALHLTGLKKIRLDLCHAGVLAALFARDAAAAERGEALYEALAGKDVPRLNELTDDLGADTRAALRALPRLYGDASVLDDARRLLPALPEIARALDDLAHLAAQVKDAEVAIDLADLRGYAYHSGAMFAAYVDGVPNAVAHGGRYDHVGQAYGRARPATGFSLDLREIARISPVEARGAAILAPWKQDDALRAAVGALRDAGEVVIQALPGHDHVLDEFACDRALVERDGAWVIEPR</sequence>
<feature type="chain" id="PRO_1000016252" description="ATP phosphoribosyltransferase regulatory subunit">
    <location>
        <begin position="1"/>
        <end position="382"/>
    </location>
</feature>
<proteinExistence type="inferred from homology"/>
<evidence type="ECO:0000255" key="1">
    <source>
        <dbReference type="HAMAP-Rule" id="MF_00125"/>
    </source>
</evidence>
<reference key="1">
    <citation type="journal article" date="2010" name="Genome Biol. Evol.">
        <title>Continuing evolution of Burkholderia mallei through genome reduction and large-scale rearrangements.</title>
        <authorList>
            <person name="Losada L."/>
            <person name="Ronning C.M."/>
            <person name="DeShazer D."/>
            <person name="Woods D."/>
            <person name="Fedorova N."/>
            <person name="Kim H.S."/>
            <person name="Shabalina S.A."/>
            <person name="Pearson T.R."/>
            <person name="Brinkac L."/>
            <person name="Tan P."/>
            <person name="Nandi T."/>
            <person name="Crabtree J."/>
            <person name="Badger J."/>
            <person name="Beckstrom-Sternberg S."/>
            <person name="Saqib M."/>
            <person name="Schutzer S.E."/>
            <person name="Keim P."/>
            <person name="Nierman W.C."/>
        </authorList>
    </citation>
    <scope>NUCLEOTIDE SEQUENCE [LARGE SCALE GENOMIC DNA]</scope>
    <source>
        <strain>SAVP1</strain>
    </source>
</reference>